<name>RISB_METAC</name>
<reference key="1">
    <citation type="journal article" date="2002" name="Genome Res.">
        <title>The genome of Methanosarcina acetivorans reveals extensive metabolic and physiological diversity.</title>
        <authorList>
            <person name="Galagan J.E."/>
            <person name="Nusbaum C."/>
            <person name="Roy A."/>
            <person name="Endrizzi M.G."/>
            <person name="Macdonald P."/>
            <person name="FitzHugh W."/>
            <person name="Calvo S."/>
            <person name="Engels R."/>
            <person name="Smirnov S."/>
            <person name="Atnoor D."/>
            <person name="Brown A."/>
            <person name="Allen N."/>
            <person name="Naylor J."/>
            <person name="Stange-Thomann N."/>
            <person name="DeArellano K."/>
            <person name="Johnson R."/>
            <person name="Linton L."/>
            <person name="McEwan P."/>
            <person name="McKernan K."/>
            <person name="Talamas J."/>
            <person name="Tirrell A."/>
            <person name="Ye W."/>
            <person name="Zimmer A."/>
            <person name="Barber R.D."/>
            <person name="Cann I."/>
            <person name="Graham D.E."/>
            <person name="Grahame D.A."/>
            <person name="Guss A.M."/>
            <person name="Hedderich R."/>
            <person name="Ingram-Smith C."/>
            <person name="Kuettner H.C."/>
            <person name="Krzycki J.A."/>
            <person name="Leigh J.A."/>
            <person name="Li W."/>
            <person name="Liu J."/>
            <person name="Mukhopadhyay B."/>
            <person name="Reeve J.N."/>
            <person name="Smith K."/>
            <person name="Springer T.A."/>
            <person name="Umayam L.A."/>
            <person name="White O."/>
            <person name="White R.H."/>
            <person name="de Macario E.C."/>
            <person name="Ferry J.G."/>
            <person name="Jarrell K.F."/>
            <person name="Jing H."/>
            <person name="Macario A.J.L."/>
            <person name="Paulsen I.T."/>
            <person name="Pritchett M."/>
            <person name="Sowers K.R."/>
            <person name="Swanson R.V."/>
            <person name="Zinder S.H."/>
            <person name="Lander E."/>
            <person name="Metcalf W.W."/>
            <person name="Birren B."/>
        </authorList>
    </citation>
    <scope>NUCLEOTIDE SEQUENCE [LARGE SCALE GENOMIC DNA]</scope>
    <source>
        <strain>ATCC 35395 / DSM 2834 / JCM 12185 / C2A</strain>
    </source>
</reference>
<accession>Q8TPT7</accession>
<organism>
    <name type="scientific">Methanosarcina acetivorans (strain ATCC 35395 / DSM 2834 / JCM 12185 / C2A)</name>
    <dbReference type="NCBI Taxonomy" id="188937"/>
    <lineage>
        <taxon>Archaea</taxon>
        <taxon>Methanobacteriati</taxon>
        <taxon>Methanobacteriota</taxon>
        <taxon>Stenosarchaea group</taxon>
        <taxon>Methanomicrobia</taxon>
        <taxon>Methanosarcinales</taxon>
        <taxon>Methanosarcinaceae</taxon>
        <taxon>Methanosarcina</taxon>
    </lineage>
</organism>
<keyword id="KW-1185">Reference proteome</keyword>
<keyword id="KW-0686">Riboflavin biosynthesis</keyword>
<keyword id="KW-0808">Transferase</keyword>
<comment type="function">
    <text evidence="1">Catalyzes the formation of 6,7-dimethyl-8-ribityllumazine by condensation of 5-amino-6-(D-ribitylamino)uracil with 3,4-dihydroxy-2-butanone 4-phosphate. This is the penultimate step in the biosynthesis of riboflavin.</text>
</comment>
<comment type="catalytic activity">
    <reaction evidence="1">
        <text>(2S)-2-hydroxy-3-oxobutyl phosphate + 5-amino-6-(D-ribitylamino)uracil = 6,7-dimethyl-8-(1-D-ribityl)lumazine + phosphate + 2 H2O + H(+)</text>
        <dbReference type="Rhea" id="RHEA:26152"/>
        <dbReference type="ChEBI" id="CHEBI:15377"/>
        <dbReference type="ChEBI" id="CHEBI:15378"/>
        <dbReference type="ChEBI" id="CHEBI:15934"/>
        <dbReference type="ChEBI" id="CHEBI:43474"/>
        <dbReference type="ChEBI" id="CHEBI:58201"/>
        <dbReference type="ChEBI" id="CHEBI:58830"/>
        <dbReference type="EC" id="2.5.1.78"/>
    </reaction>
</comment>
<comment type="pathway">
    <text evidence="1">Cofactor biosynthesis; riboflavin biosynthesis; riboflavin from 2-hydroxy-3-oxobutyl phosphate and 5-amino-6-(D-ribitylamino)uracil: step 1/2.</text>
</comment>
<comment type="similarity">
    <text evidence="1">Belongs to the DMRL synthase family.</text>
</comment>
<dbReference type="EC" id="2.5.1.78" evidence="1"/>
<dbReference type="EMBL" id="AE010299">
    <property type="protein sequence ID" value="AAM05224.1"/>
    <property type="molecule type" value="Genomic_DNA"/>
</dbReference>
<dbReference type="RefSeq" id="WP_011021820.1">
    <property type="nucleotide sequence ID" value="NC_003552.1"/>
</dbReference>
<dbReference type="SMR" id="Q8TPT7"/>
<dbReference type="FunCoup" id="Q8TPT7">
    <property type="interactions" value="100"/>
</dbReference>
<dbReference type="STRING" id="188937.MA_1818"/>
<dbReference type="EnsemblBacteria" id="AAM05224">
    <property type="protein sequence ID" value="AAM05224"/>
    <property type="gene ID" value="MA_1818"/>
</dbReference>
<dbReference type="GeneID" id="1473707"/>
<dbReference type="KEGG" id="mac:MA_1818"/>
<dbReference type="HOGENOM" id="CLU_089358_3_1_2"/>
<dbReference type="InParanoid" id="Q8TPT7"/>
<dbReference type="OrthoDB" id="7610at2157"/>
<dbReference type="PhylomeDB" id="Q8TPT7"/>
<dbReference type="BRENDA" id="2.5.1.78">
    <property type="organism ID" value="7224"/>
</dbReference>
<dbReference type="UniPathway" id="UPA00275">
    <property type="reaction ID" value="UER00404"/>
</dbReference>
<dbReference type="Proteomes" id="UP000002487">
    <property type="component" value="Chromosome"/>
</dbReference>
<dbReference type="GO" id="GO:0005737">
    <property type="term" value="C:cytoplasm"/>
    <property type="evidence" value="ECO:0000318"/>
    <property type="project" value="GO_Central"/>
</dbReference>
<dbReference type="GO" id="GO:0009349">
    <property type="term" value="C:riboflavin synthase complex"/>
    <property type="evidence" value="ECO:0007669"/>
    <property type="project" value="InterPro"/>
</dbReference>
<dbReference type="GO" id="GO:0000906">
    <property type="term" value="F:6,7-dimethyl-8-ribityllumazine synthase activity"/>
    <property type="evidence" value="ECO:0000318"/>
    <property type="project" value="GO_Central"/>
</dbReference>
<dbReference type="GO" id="GO:0009231">
    <property type="term" value="P:riboflavin biosynthetic process"/>
    <property type="evidence" value="ECO:0000318"/>
    <property type="project" value="GO_Central"/>
</dbReference>
<dbReference type="CDD" id="cd09211">
    <property type="entry name" value="Lumazine_synthase_archaeal"/>
    <property type="match status" value="1"/>
</dbReference>
<dbReference type="FunFam" id="3.40.50.960:FF:000003">
    <property type="entry name" value="6,7-dimethyl-8-ribityllumazine synthase"/>
    <property type="match status" value="1"/>
</dbReference>
<dbReference type="Gene3D" id="3.40.50.960">
    <property type="entry name" value="Lumazine/riboflavin synthase"/>
    <property type="match status" value="1"/>
</dbReference>
<dbReference type="HAMAP" id="MF_00178">
    <property type="entry name" value="Lumazine_synth"/>
    <property type="match status" value="1"/>
</dbReference>
<dbReference type="InterPro" id="IPR034964">
    <property type="entry name" value="LS"/>
</dbReference>
<dbReference type="InterPro" id="IPR002180">
    <property type="entry name" value="LS/RS"/>
</dbReference>
<dbReference type="InterPro" id="IPR036467">
    <property type="entry name" value="LS/RS_sf"/>
</dbReference>
<dbReference type="NCBIfam" id="TIGR00114">
    <property type="entry name" value="lumazine-synth"/>
    <property type="match status" value="1"/>
</dbReference>
<dbReference type="PANTHER" id="PTHR21058:SF0">
    <property type="entry name" value="6,7-DIMETHYL-8-RIBITYLLUMAZINE SYNTHASE"/>
    <property type="match status" value="1"/>
</dbReference>
<dbReference type="PANTHER" id="PTHR21058">
    <property type="entry name" value="6,7-DIMETHYL-8-RIBITYLLUMAZINE SYNTHASE DMRL SYNTHASE LUMAZINE SYNTHASE"/>
    <property type="match status" value="1"/>
</dbReference>
<dbReference type="Pfam" id="PF00885">
    <property type="entry name" value="DMRL_synthase"/>
    <property type="match status" value="1"/>
</dbReference>
<dbReference type="SUPFAM" id="SSF52121">
    <property type="entry name" value="Lumazine synthase"/>
    <property type="match status" value="1"/>
</dbReference>
<proteinExistence type="inferred from homology"/>
<evidence type="ECO:0000255" key="1">
    <source>
        <dbReference type="HAMAP-Rule" id="MF_00178"/>
    </source>
</evidence>
<gene>
    <name evidence="1" type="primary">ribH</name>
    <name type="synonym">ribE</name>
    <name type="ordered locus">MA_1818</name>
</gene>
<sequence>MTISLGFVIAEFNRDLTYQMELLGREHAEFLGATVKETILVPGVFDMPLAIKKLCQREDIDAVVTIGSVIEGETDHDQVVMQHAARKIMDLSLEFNKPVTLGIPGPGMTRMAAHERVDYAKRAVEAAVKLVRRL</sequence>
<feature type="chain" id="PRO_0000134842" description="6,7-dimethyl-8-ribityllumazine synthase">
    <location>
        <begin position="1"/>
        <end position="134"/>
    </location>
</feature>
<feature type="active site" description="Proton donor" evidence="1">
    <location>
        <position position="76"/>
    </location>
</feature>
<feature type="binding site" evidence="1">
    <location>
        <position position="12"/>
    </location>
    <ligand>
        <name>5-amino-6-(D-ribitylamino)uracil</name>
        <dbReference type="ChEBI" id="CHEBI:15934"/>
    </ligand>
</feature>
<feature type="binding site" evidence="1">
    <location>
        <begin position="44"/>
        <end position="46"/>
    </location>
    <ligand>
        <name>5-amino-6-(D-ribitylamino)uracil</name>
        <dbReference type="ChEBI" id="CHEBI:15934"/>
    </ligand>
</feature>
<feature type="binding site" evidence="1">
    <location>
        <begin position="68"/>
        <end position="70"/>
    </location>
    <ligand>
        <name>5-amino-6-(D-ribitylamino)uracil</name>
        <dbReference type="ChEBI" id="CHEBI:15934"/>
    </ligand>
</feature>
<feature type="binding site" evidence="1">
    <location>
        <begin position="73"/>
        <end position="74"/>
    </location>
    <ligand>
        <name>(2S)-2-hydroxy-3-oxobutyl phosphate</name>
        <dbReference type="ChEBI" id="CHEBI:58830"/>
    </ligand>
</feature>
<feature type="binding site" evidence="1">
    <location>
        <position position="101"/>
    </location>
    <ligand>
        <name>5-amino-6-(D-ribitylamino)uracil</name>
        <dbReference type="ChEBI" id="CHEBI:15934"/>
    </ligand>
</feature>
<feature type="binding site" evidence="1">
    <location>
        <position position="116"/>
    </location>
    <ligand>
        <name>(2S)-2-hydroxy-3-oxobutyl phosphate</name>
        <dbReference type="ChEBI" id="CHEBI:58830"/>
    </ligand>
</feature>
<protein>
    <recommendedName>
        <fullName evidence="1">6,7-dimethyl-8-ribityllumazine synthase</fullName>
        <shortName evidence="1">DMRL synthase</shortName>
        <shortName evidence="1">LS</shortName>
        <shortName evidence="1">Lumazine synthase</shortName>
        <ecNumber evidence="1">2.5.1.78</ecNumber>
    </recommendedName>
</protein>